<gene>
    <name evidence="1" type="primary">gpmA</name>
    <name type="ordered locus">llmg_0355</name>
</gene>
<evidence type="ECO:0000255" key="1">
    <source>
        <dbReference type="HAMAP-Rule" id="MF_01039"/>
    </source>
</evidence>
<feature type="chain" id="PRO_1000064068" description="2,3-bisphosphoglycerate-dependent phosphoglycerate mutase">
    <location>
        <begin position="1"/>
        <end position="233"/>
    </location>
</feature>
<feature type="active site" description="Tele-phosphohistidine intermediate" evidence="1">
    <location>
        <position position="9"/>
    </location>
</feature>
<feature type="active site" description="Proton donor/acceptor" evidence="1">
    <location>
        <position position="87"/>
    </location>
</feature>
<feature type="binding site" evidence="1">
    <location>
        <begin position="8"/>
        <end position="15"/>
    </location>
    <ligand>
        <name>substrate</name>
    </ligand>
</feature>
<feature type="binding site" evidence="1">
    <location>
        <begin position="21"/>
        <end position="22"/>
    </location>
    <ligand>
        <name>substrate</name>
    </ligand>
</feature>
<feature type="binding site" evidence="1">
    <location>
        <position position="60"/>
    </location>
    <ligand>
        <name>substrate</name>
    </ligand>
</feature>
<feature type="binding site" evidence="1">
    <location>
        <begin position="87"/>
        <end position="90"/>
    </location>
    <ligand>
        <name>substrate</name>
    </ligand>
</feature>
<feature type="binding site" evidence="1">
    <location>
        <position position="98"/>
    </location>
    <ligand>
        <name>substrate</name>
    </ligand>
</feature>
<feature type="binding site" evidence="1">
    <location>
        <begin position="114"/>
        <end position="115"/>
    </location>
    <ligand>
        <name>substrate</name>
    </ligand>
</feature>
<feature type="binding site" evidence="1">
    <location>
        <begin position="183"/>
        <end position="184"/>
    </location>
    <ligand>
        <name>substrate</name>
    </ligand>
</feature>
<feature type="site" description="Transition state stabilizer" evidence="1">
    <location>
        <position position="182"/>
    </location>
</feature>
<organism>
    <name type="scientific">Lactococcus lactis subsp. cremoris (strain MG1363)</name>
    <dbReference type="NCBI Taxonomy" id="416870"/>
    <lineage>
        <taxon>Bacteria</taxon>
        <taxon>Bacillati</taxon>
        <taxon>Bacillota</taxon>
        <taxon>Bacilli</taxon>
        <taxon>Lactobacillales</taxon>
        <taxon>Streptococcaceae</taxon>
        <taxon>Lactococcus</taxon>
        <taxon>Lactococcus cremoris subsp. cremoris</taxon>
    </lineage>
</organism>
<accession>A2RI67</accession>
<keyword id="KW-0312">Gluconeogenesis</keyword>
<keyword id="KW-0324">Glycolysis</keyword>
<keyword id="KW-0413">Isomerase</keyword>
<name>GPMA_LACLM</name>
<proteinExistence type="inferred from homology"/>
<dbReference type="EC" id="5.4.2.11" evidence="1"/>
<dbReference type="EMBL" id="AM406671">
    <property type="protein sequence ID" value="CAL96960.1"/>
    <property type="molecule type" value="Genomic_DNA"/>
</dbReference>
<dbReference type="RefSeq" id="WP_011675395.1">
    <property type="nucleotide sequence ID" value="NC_009004.1"/>
</dbReference>
<dbReference type="SMR" id="A2RI67"/>
<dbReference type="STRING" id="416870.llmg_0355"/>
<dbReference type="GeneID" id="61108659"/>
<dbReference type="KEGG" id="llm:llmg_0355"/>
<dbReference type="eggNOG" id="COG0588">
    <property type="taxonomic scope" value="Bacteria"/>
</dbReference>
<dbReference type="HOGENOM" id="CLU_033323_1_5_9"/>
<dbReference type="OrthoDB" id="9781415at2"/>
<dbReference type="PhylomeDB" id="A2RI67"/>
<dbReference type="UniPathway" id="UPA00109">
    <property type="reaction ID" value="UER00186"/>
</dbReference>
<dbReference type="Proteomes" id="UP000000364">
    <property type="component" value="Chromosome"/>
</dbReference>
<dbReference type="GO" id="GO:0004619">
    <property type="term" value="F:phosphoglycerate mutase activity"/>
    <property type="evidence" value="ECO:0007669"/>
    <property type="project" value="UniProtKB-EC"/>
</dbReference>
<dbReference type="GO" id="GO:0006094">
    <property type="term" value="P:gluconeogenesis"/>
    <property type="evidence" value="ECO:0007669"/>
    <property type="project" value="UniProtKB-UniRule"/>
</dbReference>
<dbReference type="GO" id="GO:0006096">
    <property type="term" value="P:glycolytic process"/>
    <property type="evidence" value="ECO:0007669"/>
    <property type="project" value="UniProtKB-UniRule"/>
</dbReference>
<dbReference type="CDD" id="cd07067">
    <property type="entry name" value="HP_PGM_like"/>
    <property type="match status" value="1"/>
</dbReference>
<dbReference type="FunFam" id="3.40.50.1240:FF:000003">
    <property type="entry name" value="2,3-bisphosphoglycerate-dependent phosphoglycerate mutase"/>
    <property type="match status" value="1"/>
</dbReference>
<dbReference type="Gene3D" id="3.40.50.1240">
    <property type="entry name" value="Phosphoglycerate mutase-like"/>
    <property type="match status" value="1"/>
</dbReference>
<dbReference type="HAMAP" id="MF_01039">
    <property type="entry name" value="PGAM_GpmA"/>
    <property type="match status" value="1"/>
</dbReference>
<dbReference type="InterPro" id="IPR013078">
    <property type="entry name" value="His_Pase_superF_clade-1"/>
</dbReference>
<dbReference type="InterPro" id="IPR029033">
    <property type="entry name" value="His_PPase_superfam"/>
</dbReference>
<dbReference type="InterPro" id="IPR005952">
    <property type="entry name" value="Phosphogly_mut1"/>
</dbReference>
<dbReference type="NCBIfam" id="TIGR01258">
    <property type="entry name" value="pgm_1"/>
    <property type="match status" value="1"/>
</dbReference>
<dbReference type="NCBIfam" id="NF010713">
    <property type="entry name" value="PRK14115.1"/>
    <property type="match status" value="1"/>
</dbReference>
<dbReference type="NCBIfam" id="NF010715">
    <property type="entry name" value="PRK14117.1"/>
    <property type="match status" value="1"/>
</dbReference>
<dbReference type="PANTHER" id="PTHR11931">
    <property type="entry name" value="PHOSPHOGLYCERATE MUTASE"/>
    <property type="match status" value="1"/>
</dbReference>
<dbReference type="Pfam" id="PF00300">
    <property type="entry name" value="His_Phos_1"/>
    <property type="match status" value="1"/>
</dbReference>
<dbReference type="PIRSF" id="PIRSF000709">
    <property type="entry name" value="6PFK_2-Ptase"/>
    <property type="match status" value="1"/>
</dbReference>
<dbReference type="SMART" id="SM00855">
    <property type="entry name" value="PGAM"/>
    <property type="match status" value="1"/>
</dbReference>
<dbReference type="SUPFAM" id="SSF53254">
    <property type="entry name" value="Phosphoglycerate mutase-like"/>
    <property type="match status" value="1"/>
</dbReference>
<protein>
    <recommendedName>
        <fullName evidence="1">2,3-bisphosphoglycerate-dependent phosphoglycerate mutase</fullName>
        <shortName evidence="1">BPG-dependent PGAM</shortName>
        <shortName evidence="1">PGAM</shortName>
        <shortName evidence="1">Phosphoglyceromutase</shortName>
        <shortName evidence="1">dPGM</shortName>
        <ecNumber evidence="1">5.4.2.11</ecNumber>
    </recommendedName>
</protein>
<sequence>MPKLVFARHGESEWNLANLFTGWADVDLSENGTKQAIEAGKLIKEAGIEFDIAYTSVLKRAIKTTNLALEFSDQLWVPVVKSWRLNERHYGGLTGLNKADAAAKHGDEQVHIWRRSYDVLPPAMDHDDKYTAHGDRRYAGLEDSLIPDAENLKVTLERALPFWEDQIAPALKEGKNVFVGAHGNSIRALVKQIKKLSDDEIMDVEIPNFPPLVFEFDDNLNVQNEYYLAPKKA</sequence>
<reference key="1">
    <citation type="journal article" date="2007" name="J. Bacteriol.">
        <title>The complete genome sequence of the lactic acid bacterial paradigm Lactococcus lactis subsp. cremoris MG1363.</title>
        <authorList>
            <person name="Wegmann U."/>
            <person name="O'Connell-Motherway M."/>
            <person name="Zomer A."/>
            <person name="Buist G."/>
            <person name="Shearman C."/>
            <person name="Canchaya C."/>
            <person name="Ventura M."/>
            <person name="Goesmann A."/>
            <person name="Gasson M.J."/>
            <person name="Kuipers O.P."/>
            <person name="van Sinderen D."/>
            <person name="Kok J."/>
        </authorList>
    </citation>
    <scope>NUCLEOTIDE SEQUENCE [LARGE SCALE GENOMIC DNA]</scope>
    <source>
        <strain>MG1363</strain>
    </source>
</reference>
<comment type="function">
    <text evidence="1">Catalyzes the interconversion of 2-phosphoglycerate and 3-phosphoglycerate.</text>
</comment>
<comment type="catalytic activity">
    <reaction evidence="1">
        <text>(2R)-2-phosphoglycerate = (2R)-3-phosphoglycerate</text>
        <dbReference type="Rhea" id="RHEA:15901"/>
        <dbReference type="ChEBI" id="CHEBI:58272"/>
        <dbReference type="ChEBI" id="CHEBI:58289"/>
        <dbReference type="EC" id="5.4.2.11"/>
    </reaction>
</comment>
<comment type="pathway">
    <text evidence="1">Carbohydrate degradation; glycolysis; pyruvate from D-glyceraldehyde 3-phosphate: step 3/5.</text>
</comment>
<comment type="similarity">
    <text evidence="1">Belongs to the phosphoglycerate mutase family. BPG-dependent PGAM subfamily.</text>
</comment>